<name>CH60_ACIF2</name>
<keyword id="KW-0067">ATP-binding</keyword>
<keyword id="KW-0143">Chaperone</keyword>
<keyword id="KW-0963">Cytoplasm</keyword>
<keyword id="KW-0413">Isomerase</keyword>
<keyword id="KW-0547">Nucleotide-binding</keyword>
<keyword id="KW-1185">Reference proteome</keyword>
<organism>
    <name type="scientific">Acidithiobacillus ferrooxidans (strain ATCC 23270 / DSM 14882 / CIP 104768 / NCIMB 8455)</name>
    <name type="common">Ferrobacillus ferrooxidans (strain ATCC 23270)</name>
    <dbReference type="NCBI Taxonomy" id="243159"/>
    <lineage>
        <taxon>Bacteria</taxon>
        <taxon>Pseudomonadati</taxon>
        <taxon>Pseudomonadota</taxon>
        <taxon>Acidithiobacillia</taxon>
        <taxon>Acidithiobacillales</taxon>
        <taxon>Acidithiobacillaceae</taxon>
        <taxon>Acidithiobacillus</taxon>
    </lineage>
</organism>
<proteinExistence type="inferred from homology"/>
<feature type="chain" id="PRO_1000129962" description="Chaperonin GroEL">
    <location>
        <begin position="1"/>
        <end position="551"/>
    </location>
</feature>
<feature type="binding site" evidence="1">
    <location>
        <begin position="30"/>
        <end position="33"/>
    </location>
    <ligand>
        <name>ATP</name>
        <dbReference type="ChEBI" id="CHEBI:30616"/>
    </ligand>
</feature>
<feature type="binding site" evidence="1">
    <location>
        <position position="51"/>
    </location>
    <ligand>
        <name>ATP</name>
        <dbReference type="ChEBI" id="CHEBI:30616"/>
    </ligand>
</feature>
<feature type="binding site" evidence="1">
    <location>
        <begin position="87"/>
        <end position="91"/>
    </location>
    <ligand>
        <name>ATP</name>
        <dbReference type="ChEBI" id="CHEBI:30616"/>
    </ligand>
</feature>
<feature type="binding site" evidence="1">
    <location>
        <position position="415"/>
    </location>
    <ligand>
        <name>ATP</name>
        <dbReference type="ChEBI" id="CHEBI:30616"/>
    </ligand>
</feature>
<feature type="binding site" evidence="1">
    <location>
        <begin position="479"/>
        <end position="481"/>
    </location>
    <ligand>
        <name>ATP</name>
        <dbReference type="ChEBI" id="CHEBI:30616"/>
    </ligand>
</feature>
<feature type="binding site" evidence="1">
    <location>
        <position position="495"/>
    </location>
    <ligand>
        <name>ATP</name>
        <dbReference type="ChEBI" id="CHEBI:30616"/>
    </ligand>
</feature>
<accession>B7J561</accession>
<reference key="1">
    <citation type="journal article" date="2008" name="BMC Genomics">
        <title>Acidithiobacillus ferrooxidans metabolism: from genome sequence to industrial applications.</title>
        <authorList>
            <person name="Valdes J."/>
            <person name="Pedroso I."/>
            <person name="Quatrini R."/>
            <person name="Dodson R.J."/>
            <person name="Tettelin H."/>
            <person name="Blake R. II"/>
            <person name="Eisen J.A."/>
            <person name="Holmes D.S."/>
        </authorList>
    </citation>
    <scope>NUCLEOTIDE SEQUENCE [LARGE SCALE GENOMIC DNA]</scope>
    <source>
        <strain>ATCC 23270 / DSM 14882 / CIP 104768 / NCIMB 8455</strain>
    </source>
</reference>
<gene>
    <name evidence="1" type="primary">groEL</name>
    <name evidence="1" type="synonym">groL</name>
    <name type="ordered locus">AFE_0542</name>
</gene>
<dbReference type="EC" id="5.6.1.7" evidence="1"/>
<dbReference type="EMBL" id="CP001219">
    <property type="protein sequence ID" value="ACK80015.1"/>
    <property type="molecule type" value="Genomic_DNA"/>
</dbReference>
<dbReference type="RefSeq" id="WP_012536194.1">
    <property type="nucleotide sequence ID" value="NC_011761.1"/>
</dbReference>
<dbReference type="SMR" id="B7J561"/>
<dbReference type="STRING" id="243159.AFE_0542"/>
<dbReference type="PaxDb" id="243159-AFE_0542"/>
<dbReference type="GeneID" id="65279901"/>
<dbReference type="KEGG" id="afr:AFE_0542"/>
<dbReference type="eggNOG" id="COG0459">
    <property type="taxonomic scope" value="Bacteria"/>
</dbReference>
<dbReference type="HOGENOM" id="CLU_016503_3_0_6"/>
<dbReference type="Proteomes" id="UP000001362">
    <property type="component" value="Chromosome"/>
</dbReference>
<dbReference type="GO" id="GO:0005737">
    <property type="term" value="C:cytoplasm"/>
    <property type="evidence" value="ECO:0007669"/>
    <property type="project" value="UniProtKB-SubCell"/>
</dbReference>
<dbReference type="GO" id="GO:0005524">
    <property type="term" value="F:ATP binding"/>
    <property type="evidence" value="ECO:0007669"/>
    <property type="project" value="UniProtKB-UniRule"/>
</dbReference>
<dbReference type="GO" id="GO:0140662">
    <property type="term" value="F:ATP-dependent protein folding chaperone"/>
    <property type="evidence" value="ECO:0007669"/>
    <property type="project" value="InterPro"/>
</dbReference>
<dbReference type="GO" id="GO:0016853">
    <property type="term" value="F:isomerase activity"/>
    <property type="evidence" value="ECO:0007669"/>
    <property type="project" value="UniProtKB-KW"/>
</dbReference>
<dbReference type="GO" id="GO:0051082">
    <property type="term" value="F:unfolded protein binding"/>
    <property type="evidence" value="ECO:0007669"/>
    <property type="project" value="UniProtKB-UniRule"/>
</dbReference>
<dbReference type="GO" id="GO:0042026">
    <property type="term" value="P:protein refolding"/>
    <property type="evidence" value="ECO:0007669"/>
    <property type="project" value="UniProtKB-UniRule"/>
</dbReference>
<dbReference type="CDD" id="cd03344">
    <property type="entry name" value="GroEL"/>
    <property type="match status" value="1"/>
</dbReference>
<dbReference type="FunFam" id="1.10.560.10:FF:000001">
    <property type="entry name" value="60 kDa chaperonin"/>
    <property type="match status" value="1"/>
</dbReference>
<dbReference type="FunFam" id="3.50.7.10:FF:000001">
    <property type="entry name" value="60 kDa chaperonin"/>
    <property type="match status" value="1"/>
</dbReference>
<dbReference type="Gene3D" id="3.50.7.10">
    <property type="entry name" value="GroEL"/>
    <property type="match status" value="1"/>
</dbReference>
<dbReference type="Gene3D" id="1.10.560.10">
    <property type="entry name" value="GroEL-like equatorial domain"/>
    <property type="match status" value="1"/>
</dbReference>
<dbReference type="Gene3D" id="3.30.260.10">
    <property type="entry name" value="TCP-1-like chaperonin intermediate domain"/>
    <property type="match status" value="1"/>
</dbReference>
<dbReference type="HAMAP" id="MF_00600">
    <property type="entry name" value="CH60"/>
    <property type="match status" value="1"/>
</dbReference>
<dbReference type="InterPro" id="IPR018370">
    <property type="entry name" value="Chaperonin_Cpn60_CS"/>
</dbReference>
<dbReference type="InterPro" id="IPR001844">
    <property type="entry name" value="Cpn60/GroEL"/>
</dbReference>
<dbReference type="InterPro" id="IPR002423">
    <property type="entry name" value="Cpn60/GroEL/TCP-1"/>
</dbReference>
<dbReference type="InterPro" id="IPR027409">
    <property type="entry name" value="GroEL-like_apical_dom_sf"/>
</dbReference>
<dbReference type="InterPro" id="IPR027413">
    <property type="entry name" value="GROEL-like_equatorial_sf"/>
</dbReference>
<dbReference type="InterPro" id="IPR027410">
    <property type="entry name" value="TCP-1-like_intermed_sf"/>
</dbReference>
<dbReference type="NCBIfam" id="TIGR02348">
    <property type="entry name" value="GroEL"/>
    <property type="match status" value="1"/>
</dbReference>
<dbReference type="NCBIfam" id="NF000592">
    <property type="entry name" value="PRK00013.1"/>
    <property type="match status" value="1"/>
</dbReference>
<dbReference type="NCBIfam" id="NF009487">
    <property type="entry name" value="PRK12849.1"/>
    <property type="match status" value="1"/>
</dbReference>
<dbReference type="NCBIfam" id="NF009488">
    <property type="entry name" value="PRK12850.1"/>
    <property type="match status" value="1"/>
</dbReference>
<dbReference type="NCBIfam" id="NF009489">
    <property type="entry name" value="PRK12851.1"/>
    <property type="match status" value="1"/>
</dbReference>
<dbReference type="PANTHER" id="PTHR45633">
    <property type="entry name" value="60 KDA HEAT SHOCK PROTEIN, MITOCHONDRIAL"/>
    <property type="match status" value="1"/>
</dbReference>
<dbReference type="Pfam" id="PF00118">
    <property type="entry name" value="Cpn60_TCP1"/>
    <property type="match status" value="1"/>
</dbReference>
<dbReference type="PRINTS" id="PR00298">
    <property type="entry name" value="CHAPERONIN60"/>
</dbReference>
<dbReference type="SUPFAM" id="SSF52029">
    <property type="entry name" value="GroEL apical domain-like"/>
    <property type="match status" value="1"/>
</dbReference>
<dbReference type="SUPFAM" id="SSF48592">
    <property type="entry name" value="GroEL equatorial domain-like"/>
    <property type="match status" value="1"/>
</dbReference>
<dbReference type="SUPFAM" id="SSF54849">
    <property type="entry name" value="GroEL-intermediate domain like"/>
    <property type="match status" value="1"/>
</dbReference>
<dbReference type="PROSITE" id="PS00296">
    <property type="entry name" value="CHAPERONINS_CPN60"/>
    <property type="match status" value="1"/>
</dbReference>
<protein>
    <recommendedName>
        <fullName evidence="1">Chaperonin GroEL</fullName>
        <ecNumber evidence="1">5.6.1.7</ecNumber>
    </recommendedName>
    <alternativeName>
        <fullName evidence="1">60 kDa chaperonin</fullName>
    </alternativeName>
    <alternativeName>
        <fullName evidence="1">Chaperonin-60</fullName>
        <shortName evidence="1">Cpn60</shortName>
    </alternativeName>
</protein>
<comment type="function">
    <text evidence="1">Together with its co-chaperonin GroES, plays an essential role in assisting protein folding. The GroEL-GroES system forms a nano-cage that allows encapsulation of the non-native substrate proteins and provides a physical environment optimized to promote and accelerate protein folding.</text>
</comment>
<comment type="catalytic activity">
    <reaction evidence="1">
        <text>ATP + H2O + a folded polypeptide = ADP + phosphate + an unfolded polypeptide.</text>
        <dbReference type="EC" id="5.6.1.7"/>
    </reaction>
</comment>
<comment type="subunit">
    <text evidence="1">Forms a cylinder of 14 subunits composed of two heptameric rings stacked back-to-back. Interacts with the co-chaperonin GroES.</text>
</comment>
<comment type="subcellular location">
    <subcellularLocation>
        <location evidence="1">Cytoplasm</location>
    </subcellularLocation>
</comment>
<comment type="similarity">
    <text evidence="1">Belongs to the chaperonin (HSP60) family.</text>
</comment>
<evidence type="ECO:0000255" key="1">
    <source>
        <dbReference type="HAMAP-Rule" id="MF_00600"/>
    </source>
</evidence>
<sequence>MPAKQVAFAEHAREKMLRGVNVLADAVKVTLGPKGRNVVLDKSFGAPTITKDGVSVAKEIELADKFENMGAQMVKEVASQASDEAGDGTTTATVLAQAIIREGLKAVIAGMNPMDLKRGIDKSVIVVVEELKKQSKPCKTQKEVAQVGTISANSDDSIGKIIAEAMEKVGNEGVITVEEGSGLANELDVVEGMQFDRGYLSPYFVNNQDKMVAELENPYILLHDKKISSIRDMLPILEQVAKSSRPLLIVAEDVEGEALATLVVNTMRGIIKVAAVKAPGFGDRRKAMLEDMAILTGGRVVSEEIGMKLESTTLADLGQAKKIVIDKENTTMIDGAGQQSEIKARVEQIRRQMEDASSDYDREKLQERVAKLAGGVAVIKVGAGSEMEMKEKKARVEDALHATRAAVEEGIVPGGGVALVRARHALEGFKTANHDQDMGVAIIRRAIEEPLRQIVANAGGEGSVVLNKVVDGKDGYGYNAATDEYGDMFEMGVIDPTKVTRTALQKASSIAGLMITTEAMVTELPKKDDKSGGDMGDMGGGMGGMGGMGGF</sequence>